<reference key="1">
    <citation type="submission" date="2006-08" db="EMBL/GenBank/DDBJ databases">
        <title>Complete sequence of chromosome 1 of Burkholderia cenocepacia HI2424.</title>
        <authorList>
            <person name="Copeland A."/>
            <person name="Lucas S."/>
            <person name="Lapidus A."/>
            <person name="Barry K."/>
            <person name="Detter J.C."/>
            <person name="Glavina del Rio T."/>
            <person name="Hammon N."/>
            <person name="Israni S."/>
            <person name="Pitluck S."/>
            <person name="Chain P."/>
            <person name="Malfatti S."/>
            <person name="Shin M."/>
            <person name="Vergez L."/>
            <person name="Schmutz J."/>
            <person name="Larimer F."/>
            <person name="Land M."/>
            <person name="Hauser L."/>
            <person name="Kyrpides N."/>
            <person name="Kim E."/>
            <person name="LiPuma J.J."/>
            <person name="Gonzalez C.F."/>
            <person name="Konstantinidis K."/>
            <person name="Tiedje J.M."/>
            <person name="Richardson P."/>
        </authorList>
    </citation>
    <scope>NUCLEOTIDE SEQUENCE [LARGE SCALE GENOMIC DNA]</scope>
    <source>
        <strain>HI2424</strain>
    </source>
</reference>
<protein>
    <recommendedName>
        <fullName evidence="1">Large ribosomal subunit protein bL9</fullName>
    </recommendedName>
    <alternativeName>
        <fullName evidence="2">50S ribosomal protein L9</fullName>
    </alternativeName>
</protein>
<evidence type="ECO:0000255" key="1">
    <source>
        <dbReference type="HAMAP-Rule" id="MF_00503"/>
    </source>
</evidence>
<evidence type="ECO:0000305" key="2"/>
<proteinExistence type="inferred from homology"/>
<dbReference type="EMBL" id="CP000458">
    <property type="protein sequence ID" value="ABK08622.1"/>
    <property type="molecule type" value="Genomic_DNA"/>
</dbReference>
<dbReference type="RefSeq" id="WP_006486256.1">
    <property type="nucleotide sequence ID" value="NC_008542.1"/>
</dbReference>
<dbReference type="SMR" id="A0K7Z5"/>
<dbReference type="GeneID" id="83048667"/>
<dbReference type="KEGG" id="bch:Bcen2424_1871"/>
<dbReference type="HOGENOM" id="CLU_078938_4_1_4"/>
<dbReference type="GO" id="GO:1990904">
    <property type="term" value="C:ribonucleoprotein complex"/>
    <property type="evidence" value="ECO:0007669"/>
    <property type="project" value="UniProtKB-KW"/>
</dbReference>
<dbReference type="GO" id="GO:0005840">
    <property type="term" value="C:ribosome"/>
    <property type="evidence" value="ECO:0007669"/>
    <property type="project" value="UniProtKB-KW"/>
</dbReference>
<dbReference type="GO" id="GO:0019843">
    <property type="term" value="F:rRNA binding"/>
    <property type="evidence" value="ECO:0007669"/>
    <property type="project" value="UniProtKB-UniRule"/>
</dbReference>
<dbReference type="GO" id="GO:0003735">
    <property type="term" value="F:structural constituent of ribosome"/>
    <property type="evidence" value="ECO:0007669"/>
    <property type="project" value="InterPro"/>
</dbReference>
<dbReference type="GO" id="GO:0006412">
    <property type="term" value="P:translation"/>
    <property type="evidence" value="ECO:0007669"/>
    <property type="project" value="UniProtKB-UniRule"/>
</dbReference>
<dbReference type="Gene3D" id="3.10.430.100">
    <property type="entry name" value="Ribosomal protein L9, C-terminal domain"/>
    <property type="match status" value="1"/>
</dbReference>
<dbReference type="Gene3D" id="3.40.5.10">
    <property type="entry name" value="Ribosomal protein L9, N-terminal domain"/>
    <property type="match status" value="1"/>
</dbReference>
<dbReference type="HAMAP" id="MF_00503">
    <property type="entry name" value="Ribosomal_bL9"/>
    <property type="match status" value="1"/>
</dbReference>
<dbReference type="InterPro" id="IPR000244">
    <property type="entry name" value="Ribosomal_bL9"/>
</dbReference>
<dbReference type="InterPro" id="IPR009027">
    <property type="entry name" value="Ribosomal_bL9/RNase_H1_N"/>
</dbReference>
<dbReference type="InterPro" id="IPR020594">
    <property type="entry name" value="Ribosomal_bL9_bac/chp"/>
</dbReference>
<dbReference type="InterPro" id="IPR020069">
    <property type="entry name" value="Ribosomal_bL9_C"/>
</dbReference>
<dbReference type="InterPro" id="IPR036791">
    <property type="entry name" value="Ribosomal_bL9_C_sf"/>
</dbReference>
<dbReference type="InterPro" id="IPR020070">
    <property type="entry name" value="Ribosomal_bL9_N"/>
</dbReference>
<dbReference type="InterPro" id="IPR036935">
    <property type="entry name" value="Ribosomal_bL9_N_sf"/>
</dbReference>
<dbReference type="NCBIfam" id="TIGR00158">
    <property type="entry name" value="L9"/>
    <property type="match status" value="1"/>
</dbReference>
<dbReference type="PANTHER" id="PTHR21368">
    <property type="entry name" value="50S RIBOSOMAL PROTEIN L9"/>
    <property type="match status" value="1"/>
</dbReference>
<dbReference type="Pfam" id="PF03948">
    <property type="entry name" value="Ribosomal_L9_C"/>
    <property type="match status" value="1"/>
</dbReference>
<dbReference type="Pfam" id="PF01281">
    <property type="entry name" value="Ribosomal_L9_N"/>
    <property type="match status" value="1"/>
</dbReference>
<dbReference type="SUPFAM" id="SSF55658">
    <property type="entry name" value="L9 N-domain-like"/>
    <property type="match status" value="1"/>
</dbReference>
<dbReference type="SUPFAM" id="SSF55653">
    <property type="entry name" value="Ribosomal protein L9 C-domain"/>
    <property type="match status" value="1"/>
</dbReference>
<dbReference type="PROSITE" id="PS00651">
    <property type="entry name" value="RIBOSOMAL_L9"/>
    <property type="match status" value="1"/>
</dbReference>
<accession>A0K7Z5</accession>
<keyword id="KW-0687">Ribonucleoprotein</keyword>
<keyword id="KW-0689">Ribosomal protein</keyword>
<keyword id="KW-0694">RNA-binding</keyword>
<keyword id="KW-0699">rRNA-binding</keyword>
<name>RL9_BURCH</name>
<feature type="chain" id="PRO_1000014749" description="Large ribosomal subunit protein bL9">
    <location>
        <begin position="1"/>
        <end position="150"/>
    </location>
</feature>
<gene>
    <name evidence="1" type="primary">rplI</name>
    <name type="ordered locus">Bcen2424_1871</name>
</gene>
<organism>
    <name type="scientific">Burkholderia cenocepacia (strain HI2424)</name>
    <dbReference type="NCBI Taxonomy" id="331272"/>
    <lineage>
        <taxon>Bacteria</taxon>
        <taxon>Pseudomonadati</taxon>
        <taxon>Pseudomonadota</taxon>
        <taxon>Betaproteobacteria</taxon>
        <taxon>Burkholderiales</taxon>
        <taxon>Burkholderiaceae</taxon>
        <taxon>Burkholderia</taxon>
        <taxon>Burkholderia cepacia complex</taxon>
    </lineage>
</organism>
<comment type="function">
    <text evidence="1">Binds to the 23S rRNA.</text>
</comment>
<comment type="similarity">
    <text evidence="1">Belongs to the bacterial ribosomal protein bL9 family.</text>
</comment>
<sequence>MQIILLEKVANLGNLGDIVKVKDGYARNFLIPNRKARRATKEAIAEFEVRRAELEKIAAEKLAASQAVGEKLNGQSFEITQKSGVDGRLFGSVTNGDVAELLKKAGYEVEKLQVRMPEGPLKMIGEHNVQVALHTDVVVDVTINVIGDHA</sequence>